<dbReference type="EC" id="3.6.1.-" evidence="1"/>
<dbReference type="EMBL" id="CP000542">
    <property type="protein sequence ID" value="ABM58139.1"/>
    <property type="molecule type" value="Genomic_DNA"/>
</dbReference>
<dbReference type="RefSeq" id="WP_011810142.1">
    <property type="nucleotide sequence ID" value="NC_008786.1"/>
</dbReference>
<dbReference type="SMR" id="A1WKI2"/>
<dbReference type="STRING" id="391735.Veis_2393"/>
<dbReference type="GeneID" id="76460955"/>
<dbReference type="KEGG" id="vei:Veis_2393"/>
<dbReference type="eggNOG" id="COG0494">
    <property type="taxonomic scope" value="Bacteria"/>
</dbReference>
<dbReference type="HOGENOM" id="CLU_087195_1_1_4"/>
<dbReference type="OrthoDB" id="9816040at2"/>
<dbReference type="Proteomes" id="UP000000374">
    <property type="component" value="Chromosome"/>
</dbReference>
<dbReference type="GO" id="GO:0016462">
    <property type="term" value="F:pyrophosphatase activity"/>
    <property type="evidence" value="ECO:0007669"/>
    <property type="project" value="UniProtKB-ARBA"/>
</dbReference>
<dbReference type="CDD" id="cd03671">
    <property type="entry name" value="NUDIX_Ap4A_hydrolase_plant_like"/>
    <property type="match status" value="1"/>
</dbReference>
<dbReference type="Gene3D" id="3.90.79.10">
    <property type="entry name" value="Nucleoside Triphosphate Pyrophosphohydrolase"/>
    <property type="match status" value="1"/>
</dbReference>
<dbReference type="HAMAP" id="MF_00298">
    <property type="entry name" value="Nudix_RppH"/>
    <property type="match status" value="1"/>
</dbReference>
<dbReference type="InterPro" id="IPR020476">
    <property type="entry name" value="Nudix_hydrolase"/>
</dbReference>
<dbReference type="InterPro" id="IPR015797">
    <property type="entry name" value="NUDIX_hydrolase-like_dom_sf"/>
</dbReference>
<dbReference type="InterPro" id="IPR020084">
    <property type="entry name" value="NUDIX_hydrolase_CS"/>
</dbReference>
<dbReference type="InterPro" id="IPR000086">
    <property type="entry name" value="NUDIX_hydrolase_dom"/>
</dbReference>
<dbReference type="InterPro" id="IPR022927">
    <property type="entry name" value="RppH"/>
</dbReference>
<dbReference type="NCBIfam" id="NF001935">
    <property type="entry name" value="PRK00714.1-2"/>
    <property type="match status" value="1"/>
</dbReference>
<dbReference type="NCBIfam" id="NF001937">
    <property type="entry name" value="PRK00714.1-4"/>
    <property type="match status" value="1"/>
</dbReference>
<dbReference type="NCBIfam" id="NF001938">
    <property type="entry name" value="PRK00714.1-5"/>
    <property type="match status" value="1"/>
</dbReference>
<dbReference type="PANTHER" id="PTHR43736">
    <property type="entry name" value="ADP-RIBOSE PYROPHOSPHATASE"/>
    <property type="match status" value="1"/>
</dbReference>
<dbReference type="PANTHER" id="PTHR43736:SF1">
    <property type="entry name" value="DIHYDRONEOPTERIN TRIPHOSPHATE DIPHOSPHATASE"/>
    <property type="match status" value="1"/>
</dbReference>
<dbReference type="Pfam" id="PF00293">
    <property type="entry name" value="NUDIX"/>
    <property type="match status" value="1"/>
</dbReference>
<dbReference type="PRINTS" id="PR00502">
    <property type="entry name" value="NUDIXFAMILY"/>
</dbReference>
<dbReference type="SUPFAM" id="SSF55811">
    <property type="entry name" value="Nudix"/>
    <property type="match status" value="1"/>
</dbReference>
<dbReference type="PROSITE" id="PS51462">
    <property type="entry name" value="NUDIX"/>
    <property type="match status" value="1"/>
</dbReference>
<dbReference type="PROSITE" id="PS00893">
    <property type="entry name" value="NUDIX_BOX"/>
    <property type="match status" value="1"/>
</dbReference>
<feature type="chain" id="PRO_1000022006" description="RNA pyrophosphohydrolase">
    <location>
        <begin position="1"/>
        <end position="221"/>
    </location>
</feature>
<feature type="domain" description="Nudix hydrolase" evidence="1">
    <location>
        <begin position="6"/>
        <end position="149"/>
    </location>
</feature>
<feature type="short sequence motif" description="Nudix box">
    <location>
        <begin position="38"/>
        <end position="59"/>
    </location>
</feature>
<accession>A1WKI2</accession>
<reference key="1">
    <citation type="submission" date="2006-12" db="EMBL/GenBank/DDBJ databases">
        <title>Complete sequence of chromosome 1 of Verminephrobacter eiseniae EF01-2.</title>
        <authorList>
            <person name="Copeland A."/>
            <person name="Lucas S."/>
            <person name="Lapidus A."/>
            <person name="Barry K."/>
            <person name="Detter J.C."/>
            <person name="Glavina del Rio T."/>
            <person name="Dalin E."/>
            <person name="Tice H."/>
            <person name="Pitluck S."/>
            <person name="Chertkov O."/>
            <person name="Brettin T."/>
            <person name="Bruce D."/>
            <person name="Han C."/>
            <person name="Tapia R."/>
            <person name="Gilna P."/>
            <person name="Schmutz J."/>
            <person name="Larimer F."/>
            <person name="Land M."/>
            <person name="Hauser L."/>
            <person name="Kyrpides N."/>
            <person name="Kim E."/>
            <person name="Stahl D."/>
            <person name="Richardson P."/>
        </authorList>
    </citation>
    <scope>NUCLEOTIDE SEQUENCE [LARGE SCALE GENOMIC DNA]</scope>
    <source>
        <strain>EF01-2</strain>
    </source>
</reference>
<keyword id="KW-0378">Hydrolase</keyword>
<keyword id="KW-1185">Reference proteome</keyword>
<gene>
    <name evidence="1" type="primary">rppH</name>
    <name evidence="1" type="synonym">nudH</name>
    <name type="ordered locus">Veis_2393</name>
</gene>
<comment type="function">
    <text evidence="1">Accelerates the degradation of transcripts by removing pyrophosphate from the 5'-end of triphosphorylated RNA, leading to a more labile monophosphorylated state that can stimulate subsequent ribonuclease cleavage.</text>
</comment>
<comment type="cofactor">
    <cofactor evidence="1">
        <name>a divalent metal cation</name>
        <dbReference type="ChEBI" id="CHEBI:60240"/>
    </cofactor>
</comment>
<comment type="similarity">
    <text evidence="1">Belongs to the Nudix hydrolase family. RppH subfamily.</text>
</comment>
<proteinExistence type="inferred from homology"/>
<name>RPPH_VEREI</name>
<protein>
    <recommendedName>
        <fullName evidence="1">RNA pyrophosphohydrolase</fullName>
        <ecNumber evidence="1">3.6.1.-</ecNumber>
    </recommendedName>
    <alternativeName>
        <fullName evidence="1">(Di)nucleoside polyphosphate hydrolase</fullName>
    </alternativeName>
</protein>
<evidence type="ECO:0000255" key="1">
    <source>
        <dbReference type="HAMAP-Rule" id="MF_00298"/>
    </source>
</evidence>
<sequence length="221" mass="26091">MLDRDGFRPNVGIVLLNQKNQVFWGKRIRTHSWQFPQGGIDRGETPEQAMFRELHEEVGLLPDHVRVVARTRDWLRYEVPDRYVRRDARGHYKGQKQIWYLLQLVGHDWNLNLRATNHPEFDAWRWNDYWVPLDVVIEFKRSVYALALTELARYLPRHEPRNRYLRSGMRTRDGEHAGLFLTRVMSPKPGIQLPPGACFDPIPPTGMPDEREGLPFTAMPR</sequence>
<organism>
    <name type="scientific">Verminephrobacter eiseniae (strain EF01-2)</name>
    <dbReference type="NCBI Taxonomy" id="391735"/>
    <lineage>
        <taxon>Bacteria</taxon>
        <taxon>Pseudomonadati</taxon>
        <taxon>Pseudomonadota</taxon>
        <taxon>Betaproteobacteria</taxon>
        <taxon>Burkholderiales</taxon>
        <taxon>Comamonadaceae</taxon>
        <taxon>Verminephrobacter</taxon>
    </lineage>
</organism>